<sequence>MAPPWVPAVGFTLVPSPGGFLGTQYIRGEGFRWYASLQKPPWHPPRWILAPIWGTLYSAMGYGSYLIWKELGGFSKEAVVPLGLYAGQLALNWAWPPLFFGARQMGWAFVDLLLTGGMAAATAMAWRQVSPPAACLLYPYLAWLAFAAMLNYRMWQDNQGRRSGRRLSE</sequence>
<comment type="function">
    <text evidence="1 2">Promotes the transport of cholesterol across mitochondrial membranes and may play a role in lipid metabolism, but its precise physiological role is controversial. It is apparently not required for steroid hormone biosynthesis. Can bind protoporphyrin IX and may play a role in the transport of porphyrins and heme (By similarity). Was initially identified as peripheral-type benzodiazepine receptor; can also bind isoquinoline carboxamides (PubMed:11145616).</text>
</comment>
<comment type="subunit">
    <text evidence="1 2">Interacts with TSPOAP1 (By similarity). Interacts with MOST-1 (By similarity). May interact with STAR.</text>
</comment>
<comment type="subcellular location">
    <subcellularLocation>
        <location evidence="2">Mitochondrion membrane</location>
        <topology evidence="2">Multi-pass membrane protein</topology>
    </subcellularLocation>
</comment>
<comment type="similarity">
    <text evidence="3">Belongs to the TspO/BZRP family.</text>
</comment>
<organism>
    <name type="scientific">Ovis aries</name>
    <name type="common">Sheep</name>
    <dbReference type="NCBI Taxonomy" id="9940"/>
    <lineage>
        <taxon>Eukaryota</taxon>
        <taxon>Metazoa</taxon>
        <taxon>Chordata</taxon>
        <taxon>Craniata</taxon>
        <taxon>Vertebrata</taxon>
        <taxon>Euteleostomi</taxon>
        <taxon>Mammalia</taxon>
        <taxon>Eutheria</taxon>
        <taxon>Laurasiatheria</taxon>
        <taxon>Artiodactyla</taxon>
        <taxon>Ruminantia</taxon>
        <taxon>Pecora</taxon>
        <taxon>Bovidae</taxon>
        <taxon>Caprinae</taxon>
        <taxon>Ovis</taxon>
    </lineage>
</organism>
<gene>
    <name type="primary">TSPO</name>
    <name type="synonym">BZRP</name>
</gene>
<name>TSPO_SHEEP</name>
<protein>
    <recommendedName>
        <fullName>Translocator protein</fullName>
    </recommendedName>
    <alternativeName>
        <fullName>Peripheral-type benzodiazepine receptor</fullName>
        <shortName>PBR</shortName>
    </alternativeName>
</protein>
<evidence type="ECO:0000250" key="1"/>
<evidence type="ECO:0000269" key="2">
    <source>
    </source>
</evidence>
<evidence type="ECO:0000305" key="3"/>
<dbReference type="EMBL" id="AF290203">
    <property type="protein sequence ID" value="AAG02465.1"/>
    <property type="molecule type" value="mRNA"/>
</dbReference>
<dbReference type="RefSeq" id="NP_001009747.1">
    <property type="nucleotide sequence ID" value="NM_001009747.1"/>
</dbReference>
<dbReference type="SMR" id="Q9GMC9"/>
<dbReference type="STRING" id="9940.ENSOARP00000020560"/>
<dbReference type="PaxDb" id="9940-ENSOARP00000020560"/>
<dbReference type="GeneID" id="443123"/>
<dbReference type="KEGG" id="oas:443123"/>
<dbReference type="CTD" id="706"/>
<dbReference type="eggNOG" id="KOG3797">
    <property type="taxonomic scope" value="Eukaryota"/>
</dbReference>
<dbReference type="OrthoDB" id="8841220at2759"/>
<dbReference type="Proteomes" id="UP000002356">
    <property type="component" value="Unplaced"/>
</dbReference>
<dbReference type="GO" id="GO:0005783">
    <property type="term" value="C:endoplasmic reticulum"/>
    <property type="evidence" value="ECO:0007669"/>
    <property type="project" value="TreeGrafter"/>
</dbReference>
<dbReference type="GO" id="GO:0031966">
    <property type="term" value="C:mitochondrial membrane"/>
    <property type="evidence" value="ECO:0007669"/>
    <property type="project" value="UniProtKB-SubCell"/>
</dbReference>
<dbReference type="GO" id="GO:0015485">
    <property type="term" value="F:cholesterol binding"/>
    <property type="evidence" value="ECO:0007669"/>
    <property type="project" value="TreeGrafter"/>
</dbReference>
<dbReference type="GO" id="GO:0006869">
    <property type="term" value="P:lipid transport"/>
    <property type="evidence" value="ECO:0007669"/>
    <property type="project" value="UniProtKB-KW"/>
</dbReference>
<dbReference type="CDD" id="cd15904">
    <property type="entry name" value="TSPO_MBR"/>
    <property type="match status" value="1"/>
</dbReference>
<dbReference type="FunFam" id="1.20.1260.100:FF:000001">
    <property type="entry name" value="translocator protein 2"/>
    <property type="match status" value="1"/>
</dbReference>
<dbReference type="Gene3D" id="1.20.1260.100">
    <property type="entry name" value="TspO/MBR protein"/>
    <property type="match status" value="1"/>
</dbReference>
<dbReference type="InterPro" id="IPR038330">
    <property type="entry name" value="TspO/MBR-related_sf"/>
</dbReference>
<dbReference type="InterPro" id="IPR004307">
    <property type="entry name" value="TspO_MBR"/>
</dbReference>
<dbReference type="PANTHER" id="PTHR10057">
    <property type="entry name" value="PERIPHERAL-TYPE BENZODIAZEPINE RECEPTOR"/>
    <property type="match status" value="1"/>
</dbReference>
<dbReference type="PANTHER" id="PTHR10057:SF5">
    <property type="entry name" value="TRANSLOCATOR PROTEIN"/>
    <property type="match status" value="1"/>
</dbReference>
<dbReference type="Pfam" id="PF03073">
    <property type="entry name" value="TspO_MBR"/>
    <property type="match status" value="1"/>
</dbReference>
<dbReference type="PIRSF" id="PIRSF005859">
    <property type="entry name" value="PBR"/>
    <property type="match status" value="1"/>
</dbReference>
<keyword id="KW-0445">Lipid transport</keyword>
<keyword id="KW-0472">Membrane</keyword>
<keyword id="KW-0496">Mitochondrion</keyword>
<keyword id="KW-0675">Receptor</keyword>
<keyword id="KW-1185">Reference proteome</keyword>
<keyword id="KW-0812">Transmembrane</keyword>
<keyword id="KW-1133">Transmembrane helix</keyword>
<keyword id="KW-0813">Transport</keyword>
<accession>Q9GMC9</accession>
<reference key="1">
    <citation type="journal article" date="2001" name="Endocrinology">
        <title>Steroidogenic acute regulatory protein and peripheral-type benzodiazepine receptor associate at the mitochondrial membrane.</title>
        <authorList>
            <person name="West L.A."/>
            <person name="Horvat R.D."/>
            <person name="Roess D.A."/>
            <person name="Barisas B.G."/>
            <person name="Juengel J.L."/>
            <person name="Niswender G.D."/>
        </authorList>
    </citation>
    <scope>NUCLEOTIDE SEQUENCE [MRNA]</scope>
    <scope>FUNCTION</scope>
    <scope>SUBCELLULAR LOCATION</scope>
    <scope>INTERACTION WITH STAR</scope>
</reference>
<feature type="chain" id="PRO_0000331458" description="Translocator protein">
    <location>
        <begin position="1"/>
        <end position="169"/>
    </location>
</feature>
<feature type="topological domain" description="Mitochondrial intermembrane" evidence="1">
    <location>
        <begin position="1"/>
        <end position="5"/>
    </location>
</feature>
<feature type="transmembrane region" description="Helical; Name=1" evidence="1">
    <location>
        <begin position="6"/>
        <end position="26"/>
    </location>
</feature>
<feature type="topological domain" description="Cytoplasmic" evidence="1">
    <location>
        <begin position="27"/>
        <end position="46"/>
    </location>
</feature>
<feature type="transmembrane region" description="Helical; Name=2" evidence="1">
    <location>
        <begin position="47"/>
        <end position="67"/>
    </location>
</feature>
<feature type="topological domain" description="Mitochondrial intermembrane" evidence="1">
    <location>
        <begin position="68"/>
        <end position="79"/>
    </location>
</feature>
<feature type="transmembrane region" description="Helical; Name=3" evidence="1">
    <location>
        <begin position="80"/>
        <end position="100"/>
    </location>
</feature>
<feature type="topological domain" description="Cytoplasmic" evidence="1">
    <location>
        <begin position="101"/>
        <end position="105"/>
    </location>
</feature>
<feature type="transmembrane region" description="Helical; Name=4" evidence="1">
    <location>
        <begin position="106"/>
        <end position="126"/>
    </location>
</feature>
<feature type="topological domain" description="Mitochondrial intermembrane" evidence="1">
    <location>
        <begin position="127"/>
        <end position="134"/>
    </location>
</feature>
<feature type="transmembrane region" description="Helical; Name=5" evidence="1">
    <location>
        <begin position="135"/>
        <end position="155"/>
    </location>
</feature>
<feature type="topological domain" description="Cytoplasmic" evidence="1">
    <location>
        <begin position="156"/>
        <end position="169"/>
    </location>
</feature>
<proteinExistence type="evidence at protein level"/>